<name>STCU_EMENI</name>
<comment type="function">
    <text evidence="3 5 6 7 8 9 10 11 13 18">Versicolorin reductase; part of the gene cluster that mediates the biosynthesis of sterigmatocystin (ST), a polyketide-derived furanocoumarin which is part of the most toxic and carcinogenic compounds among the known mycotoxins (PubMed:8017929, PubMed:8643646). The first step in the biosynthesis of sterigmatocystin is the production of hexanoate by the fatty acid synthase (FAS) units stcJ and stcK (PubMed:8962148). The polyketide backbone is assembled by the non-reducing polyketide synthase stcA by condensation of the starter hexanoyl-CoA and 7 malonyl-CoA extender units followed by cyclization and release of norsolorinic acid (By similarity). Norsolorinic acid is the first stable intermediate in the biosynthesis of sterigmatocystin and is converted into averantin (AVN) by the ketoreductase stcE which reduces the hexanoate ketone to an alcohol (Probable) (PubMed:8643646). Averantin is then oxidized into 5'-hydroxyaverantin (HAVN) by the cytochrome P450 monooxygenase stcF (PubMed:10618248). 5'-hydroxyaverantin is further converted to 5'-oxyaverantin (OAVN) by the 5'-hydroxyaverantin dehydrogenase stcG (PubMed:24957370). The next step is the conversion of OAVN into averufin (AVF) which is catalyzed by a yet to be identified enzyme (PubMed:24957370). The cytochrome P450 monooxygenase stcB and the flavin-binding monooxygenase stcW are both required for the conversion of averufin to 1-hydroxyversicolorone (PubMed:10618248). The esterase stcI probably catalyzes the formation of versiconal hemiacetal acetate from 1-hydroxyversicolorone (PubMed:24957370). The oxydoreductase stcN then probably catalyzes the biosynthetic step from versiconal to versicolorin B (VERB) (PubMed:24957370). The next step is performed by the versicolorin B desaturase stcL to produce versicolorin A (VERA) (PubMed:8999832). The ketoreductase stcU and the cytochrome P450 monooxygenase stcS are involved in the conversion of versicolorin A to demethylsterigmatocystin (PubMed:7486998). The Baeyer-Villiger oxidas stcQ and the reductase stcR might be involved in the biosynthetic step from versicolorin A to demethylsterigmatocystin (PubMed:24957370). The final step in the biosynthesis of sterigmatocystin is the methylation of demethylsterigmatocystin catalyzed by the methyltransferase stcP (PubMed:8900026).</text>
</comment>
<comment type="catalytic activity">
    <reaction evidence="17">
        <text>(4S,8R)-2,13,16,20-tetrahydroxy-7,9-dioxapentacyclo[10.8.0.0(3,10).0(4,8).0(14,19)]icosa-1(12),2,5,10,13,16,19-heptaen-18-one + NADPH + H(+) = (4S,8R,16R)-2,13,16,20-tetrahydroxy-7,9-dioxapentacyclo[10.8.0.0(3,10).0(4,8).0(14,19)]icosa-1(12),2,5,10,13,19-hexaen-18-one + NADP(+)</text>
        <dbReference type="Rhea" id="RHEA:64296"/>
        <dbReference type="ChEBI" id="CHEBI:15378"/>
        <dbReference type="ChEBI" id="CHEBI:57783"/>
        <dbReference type="ChEBI" id="CHEBI:58349"/>
        <dbReference type="ChEBI" id="CHEBI:150859"/>
        <dbReference type="ChEBI" id="CHEBI:150860"/>
    </reaction>
    <physiologicalReaction direction="left-to-right" evidence="17">
        <dbReference type="Rhea" id="RHEA:64297"/>
    </physiologicalReaction>
</comment>
<comment type="pathway">
    <text evidence="7 8">Mycotoxin biosynthesis; sterigmatocystin biosynthesis.</text>
</comment>
<comment type="induction">
    <text evidence="7 8 12">The genes forming the sterigmatocystin biosynthesis cluster are co-regulated and induced on oatmeal porridge or the fungal isolates were grown either on oatmeal porridge or in YEC medium (0.2% yeast extract, 5.0% corn steep liquor) (PubMed:8017929, PubMed:8643646). Expression is positively regulated by the cluster-specific transcription factor aflR that binds the palindromic sequence 5'-TCG(N5)CGA-3'found in the promoter (PubMed:9680223).</text>
</comment>
<comment type="disruption phenotype">
    <text evidence="7">Impairs the production of sterigmatocystin and leads to the accumulation of versicolorin A.</text>
</comment>
<comment type="similarity">
    <text evidence="16">Belongs to the short-chain dehydrogenases/reductases (SDR) family.</text>
</comment>
<evidence type="ECO:0000250" key="1">
    <source>
        <dbReference type="UniProtKB" id="L0E2Z4"/>
    </source>
</evidence>
<evidence type="ECO:0000250" key="2">
    <source>
        <dbReference type="UniProtKB" id="O93868"/>
    </source>
</evidence>
<evidence type="ECO:0000250" key="3">
    <source>
        <dbReference type="UniProtKB" id="Q12053"/>
    </source>
</evidence>
<evidence type="ECO:0000255" key="4">
    <source>
        <dbReference type="PROSITE-ProRule" id="PRU10001"/>
    </source>
</evidence>
<evidence type="ECO:0000269" key="5">
    <source>
    </source>
</evidence>
<evidence type="ECO:0000269" key="6">
    <source>
    </source>
</evidence>
<evidence type="ECO:0000269" key="7">
    <source>
    </source>
</evidence>
<evidence type="ECO:0000269" key="8">
    <source>
    </source>
</evidence>
<evidence type="ECO:0000269" key="9">
    <source>
    </source>
</evidence>
<evidence type="ECO:0000269" key="10">
    <source>
    </source>
</evidence>
<evidence type="ECO:0000269" key="11">
    <source>
    </source>
</evidence>
<evidence type="ECO:0000269" key="12">
    <source>
    </source>
</evidence>
<evidence type="ECO:0000303" key="13">
    <source>
    </source>
</evidence>
<evidence type="ECO:0000303" key="14">
    <source>
    </source>
</evidence>
<evidence type="ECO:0000303" key="15">
    <source>
    </source>
</evidence>
<evidence type="ECO:0000305" key="16"/>
<evidence type="ECO:0000305" key="17">
    <source>
    </source>
</evidence>
<evidence type="ECO:0000305" key="18">
    <source>
    </source>
</evidence>
<sequence length="264" mass="28056">MSSSDNYRLDGKVALVTGAGRGIGAAIAVALGQRGAKVVVNYANSREAAEKVVDEIKSNGSDAISIQADVGDPDAVTKLMDQAVEHFGYLDIVSSNAGIVSFGHVKDVTPDEFDRVFRVNTRGQFFVAREAYRHLREGGRIILTSSNTASVKGVPRHAVYSGSKGAIDTFVRCLAIDCGDKKITVNAVAPGAIKTDMFLSVSREYIPNGETFTDEQVDECAAWLSPLNRVGLPVDVARVVSFLASDAAEWISGKIIGVDGGAFR</sequence>
<reference key="1">
    <citation type="journal article" date="1994" name="Appl. Environ. Microbiol.">
        <title>Aspergillus nidulans verA is required for production of the mycotoxin sterigmatocystin.</title>
        <authorList>
            <person name="Keller N.P."/>
            <person name="Kantz N.J."/>
            <person name="Adams T.H."/>
        </authorList>
    </citation>
    <scope>NUCLEOTIDE SEQUENCE [GENOMIC DNA]</scope>
    <scope>INDUCTION</scope>
    <scope>FUNCTION</scope>
    <scope>DISRUPTION PHENOTYPE</scope>
    <scope>PATHWAY</scope>
    <source>
        <strain>FGSC 26</strain>
    </source>
</reference>
<reference key="2">
    <citation type="journal article" date="1996" name="Proc. Natl. Acad. Sci. U.S.A.">
        <title>Twenty-five coregulated transcripts define a sterigmatocystin gene cluster in Aspergillus nidulans.</title>
        <authorList>
            <person name="Brown D.W."/>
            <person name="Yu J.-H."/>
            <person name="Kelkar H.S."/>
            <person name="Fernandes M."/>
            <person name="Nesbitt T.C."/>
            <person name="Keller N.P."/>
            <person name="Adams T.H."/>
            <person name="Leonard T.J."/>
        </authorList>
    </citation>
    <scope>NUCLEOTIDE SEQUENCE [GENOMIC DNA]</scope>
    <scope>FUNCTION</scope>
    <scope>PATHWAY</scope>
    <source>
        <strain>FGSC 26</strain>
    </source>
</reference>
<reference key="3">
    <citation type="journal article" date="2005" name="Nature">
        <title>Sequencing of Aspergillus nidulans and comparative analysis with A. fumigatus and A. oryzae.</title>
        <authorList>
            <person name="Galagan J.E."/>
            <person name="Calvo S.E."/>
            <person name="Cuomo C."/>
            <person name="Ma L.-J."/>
            <person name="Wortman J.R."/>
            <person name="Batzoglou S."/>
            <person name="Lee S.-I."/>
            <person name="Bastuerkmen M."/>
            <person name="Spevak C.C."/>
            <person name="Clutterbuck J."/>
            <person name="Kapitonov V."/>
            <person name="Jurka J."/>
            <person name="Scazzocchio C."/>
            <person name="Farman M.L."/>
            <person name="Butler J."/>
            <person name="Purcell S."/>
            <person name="Harris S."/>
            <person name="Braus G.H."/>
            <person name="Draht O."/>
            <person name="Busch S."/>
            <person name="D'Enfert C."/>
            <person name="Bouchier C."/>
            <person name="Goldman G.H."/>
            <person name="Bell-Pedersen D."/>
            <person name="Griffiths-Jones S."/>
            <person name="Doonan J.H."/>
            <person name="Yu J."/>
            <person name="Vienken K."/>
            <person name="Pain A."/>
            <person name="Freitag M."/>
            <person name="Selker E.U."/>
            <person name="Archer D.B."/>
            <person name="Penalva M.A."/>
            <person name="Oakley B.R."/>
            <person name="Momany M."/>
            <person name="Tanaka T."/>
            <person name="Kumagai T."/>
            <person name="Asai K."/>
            <person name="Machida M."/>
            <person name="Nierman W.C."/>
            <person name="Denning D.W."/>
            <person name="Caddick M.X."/>
            <person name="Hynes M."/>
            <person name="Paoletti M."/>
            <person name="Fischer R."/>
            <person name="Miller B.L."/>
            <person name="Dyer P.S."/>
            <person name="Sachs M.S."/>
            <person name="Osmani S.A."/>
            <person name="Birren B.W."/>
        </authorList>
    </citation>
    <scope>NUCLEOTIDE SEQUENCE [LARGE SCALE GENOMIC DNA]</scope>
    <source>
        <strain>FGSC A4 / ATCC 38163 / CBS 112.46 / NRRL 194 / M139</strain>
    </source>
</reference>
<reference key="4">
    <citation type="journal article" date="2009" name="Fungal Genet. Biol.">
        <title>The 2008 update of the Aspergillus nidulans genome annotation: a community effort.</title>
        <authorList>
            <person name="Wortman J.R."/>
            <person name="Gilsenan J.M."/>
            <person name="Joardar V."/>
            <person name="Deegan J."/>
            <person name="Clutterbuck J."/>
            <person name="Andersen M.R."/>
            <person name="Archer D."/>
            <person name="Bencina M."/>
            <person name="Braus G."/>
            <person name="Coutinho P."/>
            <person name="von Dohren H."/>
            <person name="Doonan J."/>
            <person name="Driessen A.J."/>
            <person name="Durek P."/>
            <person name="Espeso E."/>
            <person name="Fekete E."/>
            <person name="Flipphi M."/>
            <person name="Estrada C.G."/>
            <person name="Geysens S."/>
            <person name="Goldman G."/>
            <person name="de Groot P.W."/>
            <person name="Hansen K."/>
            <person name="Harris S.D."/>
            <person name="Heinekamp T."/>
            <person name="Helmstaedt K."/>
            <person name="Henrissat B."/>
            <person name="Hofmann G."/>
            <person name="Homan T."/>
            <person name="Horio T."/>
            <person name="Horiuchi H."/>
            <person name="James S."/>
            <person name="Jones M."/>
            <person name="Karaffa L."/>
            <person name="Karanyi Z."/>
            <person name="Kato M."/>
            <person name="Keller N."/>
            <person name="Kelly D.E."/>
            <person name="Kiel J.A."/>
            <person name="Kim J.M."/>
            <person name="van der Klei I.J."/>
            <person name="Klis F.M."/>
            <person name="Kovalchuk A."/>
            <person name="Krasevec N."/>
            <person name="Kubicek C.P."/>
            <person name="Liu B."/>
            <person name="Maccabe A."/>
            <person name="Meyer V."/>
            <person name="Mirabito P."/>
            <person name="Miskei M."/>
            <person name="Mos M."/>
            <person name="Mullins J."/>
            <person name="Nelson D.R."/>
            <person name="Nielsen J."/>
            <person name="Oakley B.R."/>
            <person name="Osmani S.A."/>
            <person name="Pakula T."/>
            <person name="Paszewski A."/>
            <person name="Paulsen I."/>
            <person name="Pilsyk S."/>
            <person name="Pocsi I."/>
            <person name="Punt P.J."/>
            <person name="Ram A.F."/>
            <person name="Ren Q."/>
            <person name="Robellet X."/>
            <person name="Robson G."/>
            <person name="Seiboth B."/>
            <person name="van Solingen P."/>
            <person name="Specht T."/>
            <person name="Sun J."/>
            <person name="Taheri-Talesh N."/>
            <person name="Takeshita N."/>
            <person name="Ussery D."/>
            <person name="vanKuyk P.A."/>
            <person name="Visser H."/>
            <person name="van de Vondervoort P.J."/>
            <person name="de Vries R.P."/>
            <person name="Walton J."/>
            <person name="Xiang X."/>
            <person name="Xiong Y."/>
            <person name="Zeng A.P."/>
            <person name="Brandt B.W."/>
            <person name="Cornell M.J."/>
            <person name="van den Hondel C.A."/>
            <person name="Visser J."/>
            <person name="Oliver S.G."/>
            <person name="Turner G."/>
        </authorList>
    </citation>
    <scope>GENOME REANNOTATION</scope>
    <source>
        <strain>FGSC A4 / ATCC 38163 / CBS 112.46 / NRRL 194 / M139</strain>
    </source>
</reference>
<reference key="5">
    <citation type="journal article" date="1995" name="Appl. Environ. Microbiol.">
        <title>StcS, a putative P-450 monooxygenase, is required for the conversion of versicolorin A to sterigmatocystin in Aspergillus nidulans.</title>
        <authorList>
            <person name="Keller N.P."/>
            <person name="Segner S."/>
            <person name="Bhatnagar D."/>
            <person name="Adams T.H."/>
        </authorList>
    </citation>
    <scope>FUNCTION</scope>
</reference>
<reference key="6">
    <citation type="journal article" date="1995" name="J. Bacteriol.">
        <title>Sterigmatocystin biosynthesis in Aspergillus nidulans requires a novel type I polyketide synthase.</title>
        <authorList>
            <person name="Yu J.-H."/>
            <person name="Leonard T.J."/>
        </authorList>
    </citation>
    <scope>FUNCTION</scope>
    <source>
        <strain>FGSC A4 / ATCC 38163 / CBS 112.46 / NRRL 194 / M139</strain>
    </source>
</reference>
<reference key="7">
    <citation type="journal article" date="1996" name="Appl. Environ. Microbiol.">
        <title>Aspergillus nidulans stcP encodes an O-methyltransferase that is required for sterigmatocystin biosynthesis.</title>
        <authorList>
            <person name="Kelkar H.S."/>
            <person name="Keller N.P."/>
            <person name="Adams T.H."/>
        </authorList>
    </citation>
    <scope>FUNCTION</scope>
</reference>
<reference key="8">
    <citation type="journal article" date="1996" name="Proc. Natl. Acad. Sci. U.S.A.">
        <title>Aspergillus has distinct fatty acid synthases for primary and secondary metabolism.</title>
        <authorList>
            <person name="Brown D.W."/>
            <person name="Adams T.H."/>
            <person name="Keller N.P."/>
        </authorList>
    </citation>
    <scope>FUNCTION</scope>
</reference>
<reference key="9">
    <citation type="journal article" date="1997" name="J. Biol. Chem.">
        <title>Aspergillus nidulans stcL encodes a putative cytochrome P-450 monooxygenase required for bisfuran desaturation during aflatoxin/sterigmatocystin biosynthesis.</title>
        <authorList>
            <person name="Kelkar H.S."/>
            <person name="Skloss T.W."/>
            <person name="Haw J.F."/>
            <person name="Keller N.P."/>
            <person name="Adams T.H."/>
        </authorList>
    </citation>
    <scope>FUNCTION</scope>
</reference>
<reference key="10">
    <citation type="journal article" date="1998" name="Mol. Microbiol.">
        <title>Sequence-specific binding by Aspergillus nidulans aflR, a C6 zinc cluster protein regulating mycotoxin biosynthesis.</title>
        <authorList>
            <person name="Fernandes M."/>
            <person name="Keller N.P."/>
            <person name="Adams T.H."/>
        </authorList>
    </citation>
    <scope>INDUCTION</scope>
</reference>
<reference key="11">
    <citation type="journal article" date="2000" name="Appl. Environ. Microbiol.">
        <title>Requirement of monooxygenase-mediated steps for sterigmatocystin biosynthesis by Aspergillus nidulans.</title>
        <authorList>
            <person name="Keller N.P."/>
            <person name="Watanabe C.M."/>
            <person name="Kelkar H.S."/>
            <person name="Adams T.H."/>
            <person name="Townsend C.A."/>
        </authorList>
    </citation>
    <scope>FUNCTION</scope>
</reference>
<reference key="12">
    <citation type="journal article" date="2012" name="Metabolites">
        <title>Genetics of polyketide metabolism in Aspergillus nidulans.</title>
        <authorList>
            <person name="Klejnstrup M.L."/>
            <person name="Frandsen R.J."/>
            <person name="Holm D.K."/>
            <person name="Nielsen M.T."/>
            <person name="Mortensen U.H."/>
            <person name="Larsen T.O."/>
            <person name="Nielsen J.B."/>
        </authorList>
    </citation>
    <scope>REVIEW ON STERIGMATOCYSTIN BIOSYNTHESIS</scope>
</reference>
<proteinExistence type="evidence at transcript level"/>
<gene>
    <name evidence="15" type="primary">stcU</name>
    <name evidence="14" type="synonym">verA</name>
    <name type="ORF">AN7806</name>
</gene>
<feature type="chain" id="PRO_0000054781" description="Versicolorin reductase stcU">
    <location>
        <begin position="1"/>
        <end position="264"/>
    </location>
</feature>
<feature type="active site" description="Proton donor" evidence="2">
    <location>
        <position position="145"/>
    </location>
</feature>
<feature type="active site" description="Proton donor" evidence="2">
    <location>
        <position position="146"/>
    </location>
</feature>
<feature type="active site" description="Proton acceptor" evidence="4">
    <location>
        <position position="160"/>
    </location>
</feature>
<feature type="active site" description="Lowers pKa of active site Tyr" evidence="2">
    <location>
        <position position="164"/>
    </location>
</feature>
<feature type="binding site" evidence="1">
    <location>
        <position position="23"/>
    </location>
    <ligand>
        <name>NADP(+)</name>
        <dbReference type="ChEBI" id="CHEBI:58349"/>
    </ligand>
</feature>
<feature type="binding site" evidence="1">
    <location>
        <position position="69"/>
    </location>
    <ligand>
        <name>NADP(+)</name>
        <dbReference type="ChEBI" id="CHEBI:58349"/>
    </ligand>
</feature>
<feature type="binding site" evidence="2">
    <location>
        <position position="96"/>
    </location>
    <ligand>
        <name>NADP(+)</name>
        <dbReference type="ChEBI" id="CHEBI:58349"/>
    </ligand>
</feature>
<feature type="binding site" evidence="1">
    <location>
        <position position="129"/>
    </location>
    <ligand>
        <name>NADP(+)</name>
        <dbReference type="ChEBI" id="CHEBI:58349"/>
    </ligand>
</feature>
<feature type="binding site" evidence="2">
    <location>
        <position position="160"/>
    </location>
    <ligand>
        <name>NADP(+)</name>
        <dbReference type="ChEBI" id="CHEBI:58349"/>
    </ligand>
</feature>
<feature type="binding site" evidence="2">
    <location>
        <position position="164"/>
    </location>
    <ligand>
        <name>NADP(+)</name>
        <dbReference type="ChEBI" id="CHEBI:58349"/>
    </ligand>
</feature>
<feature type="binding site" evidence="2">
    <location>
        <position position="193"/>
    </location>
    <ligand>
        <name>NADP(+)</name>
        <dbReference type="ChEBI" id="CHEBI:58349"/>
    </ligand>
</feature>
<feature type="binding site" evidence="1">
    <location>
        <position position="195"/>
    </location>
    <ligand>
        <name>NADP(+)</name>
        <dbReference type="ChEBI" id="CHEBI:58349"/>
    </ligand>
</feature>
<feature type="sequence conflict" description="In Ref. 1; AAA53572." evidence="16" ref="1">
    <original>R</original>
    <variation>P</variation>
    <location>
        <position position="34"/>
    </location>
</feature>
<feature type="sequence conflict" description="In Ref. 1; AAA53572." evidence="16" ref="1">
    <original>GSD</original>
    <variation>AQS</variation>
    <location>
        <begin position="60"/>
        <end position="62"/>
    </location>
</feature>
<feature type="sequence conflict" description="In Ref. 2; AAC49205." evidence="16" ref="2">
    <original>GSD</original>
    <variation>AQT</variation>
    <location>
        <begin position="60"/>
        <end position="62"/>
    </location>
</feature>
<keyword id="KW-0521">NADP</keyword>
<keyword id="KW-0560">Oxidoreductase</keyword>
<keyword id="KW-1185">Reference proteome</keyword>
<protein>
    <recommendedName>
        <fullName evidence="14">Versicolorin reductase stcU</fullName>
        <ecNumber evidence="17">1.3.1.-</ecNumber>
    </recommendedName>
    <alternativeName>
        <fullName evidence="15">Sterigmatocystin biosynthesis cluster protein U</fullName>
    </alternativeName>
</protein>
<organism>
    <name type="scientific">Emericella nidulans (strain FGSC A4 / ATCC 38163 / CBS 112.46 / NRRL 194 / M139)</name>
    <name type="common">Aspergillus nidulans</name>
    <dbReference type="NCBI Taxonomy" id="227321"/>
    <lineage>
        <taxon>Eukaryota</taxon>
        <taxon>Fungi</taxon>
        <taxon>Dikarya</taxon>
        <taxon>Ascomycota</taxon>
        <taxon>Pezizomycotina</taxon>
        <taxon>Eurotiomycetes</taxon>
        <taxon>Eurotiomycetidae</taxon>
        <taxon>Eurotiales</taxon>
        <taxon>Aspergillaceae</taxon>
        <taxon>Aspergillus</taxon>
        <taxon>Aspergillus subgen. Nidulantes</taxon>
    </lineage>
</organism>
<dbReference type="EC" id="1.3.1.-" evidence="17"/>
<dbReference type="EMBL" id="L27825">
    <property type="protein sequence ID" value="AAA53572.1"/>
    <property type="molecule type" value="Genomic_DNA"/>
</dbReference>
<dbReference type="EMBL" id="U34740">
    <property type="protein sequence ID" value="AAC49205.1"/>
    <property type="molecule type" value="Genomic_DNA"/>
</dbReference>
<dbReference type="EMBL" id="AACD01000132">
    <property type="protein sequence ID" value="EAA61594.1"/>
    <property type="molecule type" value="Genomic_DNA"/>
</dbReference>
<dbReference type="EMBL" id="BN001304">
    <property type="protein sequence ID" value="CBF80146.1"/>
    <property type="molecule type" value="Genomic_DNA"/>
</dbReference>
<dbReference type="RefSeq" id="XP_681075.1">
    <property type="nucleotide sequence ID" value="XM_675983.1"/>
</dbReference>
<dbReference type="SMR" id="Q00791"/>
<dbReference type="STRING" id="227321.Q00791"/>
<dbReference type="EnsemblFungi" id="CBF80146">
    <property type="protein sequence ID" value="CBF80146"/>
    <property type="gene ID" value="ANIA_07806"/>
</dbReference>
<dbReference type="KEGG" id="ani:ANIA_07806"/>
<dbReference type="VEuPathDB" id="FungiDB:AN7806"/>
<dbReference type="eggNOG" id="KOG0725">
    <property type="taxonomic scope" value="Eukaryota"/>
</dbReference>
<dbReference type="HOGENOM" id="CLU_010194_1_3_1"/>
<dbReference type="InParanoid" id="Q00791"/>
<dbReference type="OMA" id="IDWDQNV"/>
<dbReference type="OrthoDB" id="47007at2759"/>
<dbReference type="UniPathway" id="UPA00377"/>
<dbReference type="Proteomes" id="UP000000560">
    <property type="component" value="Chromosome IV"/>
</dbReference>
<dbReference type="GO" id="GO:0042469">
    <property type="term" value="F:versicolorin reductase activity"/>
    <property type="evidence" value="ECO:0000315"/>
    <property type="project" value="AspGD"/>
</dbReference>
<dbReference type="GO" id="GO:0045461">
    <property type="term" value="P:sterigmatocystin biosynthetic process"/>
    <property type="evidence" value="ECO:0000315"/>
    <property type="project" value="AspGD"/>
</dbReference>
<dbReference type="CDD" id="cd05362">
    <property type="entry name" value="THN_reductase-like_SDR_c"/>
    <property type="match status" value="1"/>
</dbReference>
<dbReference type="FunFam" id="3.40.50.720:FF:000084">
    <property type="entry name" value="Short-chain dehydrogenase reductase"/>
    <property type="match status" value="1"/>
</dbReference>
<dbReference type="Gene3D" id="3.40.50.720">
    <property type="entry name" value="NAD(P)-binding Rossmann-like Domain"/>
    <property type="match status" value="1"/>
</dbReference>
<dbReference type="InterPro" id="IPR036291">
    <property type="entry name" value="NAD(P)-bd_dom_sf"/>
</dbReference>
<dbReference type="InterPro" id="IPR020904">
    <property type="entry name" value="Sc_DH/Rdtase_CS"/>
</dbReference>
<dbReference type="InterPro" id="IPR002347">
    <property type="entry name" value="SDR_fam"/>
</dbReference>
<dbReference type="NCBIfam" id="NF005559">
    <property type="entry name" value="PRK07231.1"/>
    <property type="match status" value="1"/>
</dbReference>
<dbReference type="PANTHER" id="PTHR48107">
    <property type="entry name" value="NADPH-DEPENDENT ALDEHYDE REDUCTASE-LIKE PROTEIN, CHLOROPLASTIC-RELATED"/>
    <property type="match status" value="1"/>
</dbReference>
<dbReference type="PANTHER" id="PTHR48107:SF7">
    <property type="entry name" value="RE15974P"/>
    <property type="match status" value="1"/>
</dbReference>
<dbReference type="Pfam" id="PF13561">
    <property type="entry name" value="adh_short_C2"/>
    <property type="match status" value="1"/>
</dbReference>
<dbReference type="PRINTS" id="PR00081">
    <property type="entry name" value="GDHRDH"/>
</dbReference>
<dbReference type="PRINTS" id="PR00080">
    <property type="entry name" value="SDRFAMILY"/>
</dbReference>
<dbReference type="SMART" id="SM00822">
    <property type="entry name" value="PKS_KR"/>
    <property type="match status" value="1"/>
</dbReference>
<dbReference type="SUPFAM" id="SSF51735">
    <property type="entry name" value="NAD(P)-binding Rossmann-fold domains"/>
    <property type="match status" value="1"/>
</dbReference>
<dbReference type="PROSITE" id="PS00061">
    <property type="entry name" value="ADH_SHORT"/>
    <property type="match status" value="1"/>
</dbReference>
<accession>Q00791</accession>
<accession>C8VDS8</accession>
<accession>Q00726</accession>
<accession>Q5AV74</accession>